<keyword id="KW-0325">Glycoprotein</keyword>
<keyword id="KW-0333">Golgi apparatus</keyword>
<keyword id="KW-0472">Membrane</keyword>
<keyword id="KW-0653">Protein transport</keyword>
<keyword id="KW-0675">Receptor</keyword>
<keyword id="KW-1185">Reference proteome</keyword>
<keyword id="KW-0677">Repeat</keyword>
<keyword id="KW-0732">Signal</keyword>
<keyword id="KW-0812">Transmembrane</keyword>
<keyword id="KW-1133">Transmembrane helix</keyword>
<keyword id="KW-0813">Transport</keyword>
<name>VPS10_ARTGP</name>
<proteinExistence type="inferred from homology"/>
<sequence>MIVRSLLLAGSLLLASVVPAAHAKSDGPEIKVKEFDKVPTNPYYFEDTDTVMLSGHMAELFISTDAASTWEPLKDKDGLLFPNRYHSQSAVIYGPNRKHWATFDAAKTWREFEVPEKLIFSNEGPRPFTFHGKDPNKVIINAEECLISLCRRVTYYTTDGFKTIKKLLKNDMGCYWAVGTPVFAEGQKDLPEKLDDRIFCIWAHITPFDRTRRLIYSDTYFSDDKFRAVEIGGREIKGVNNIALIKKYLVLAASSEGTSEAAIYVSKDAVNWGRAEFYGGPKIRGGSFTVLESTNYSIQVNAASRRSRRPIGSLFTSDSAGTSFTMNVDGVNEDEKMYTDFEQVSGIQGIFLINLVDNAADVKSGQSSEKKIVSRISFDDGRTFKPLKCGDKDLHLHSITRPSNMGRIFSSPAPGLIMGVGNTGDKLKEYENGNLYVSNDAGVTWRKALDKSHKYEFGDQGSLLVAIADDGKDELLTDEISYSLNHGKDWKKAKLPHKAAAIWLTTTPDSTSLQFLLIAQGKGKSYAMSIDFSNVHERKCEEKDFERWPARLDEKGEPDCLMGHKQFYRRRKADADCFVKEKFKEPVPETEACKCTKEDFECSAGFRRNKDYDCEPDGKLKPADGKCKNPDDKFMGPSGYRMIPGDDCIKKGGVDLEKEVERPCKDVTKAPASGQIAVEKTTFETKNLNYRYLERSDTSSGDDETVILRTDDGNLFVTRDHGKTWQRGKFQEPILQYIPHKYDHDVVYLLTQGKKAYWSIDRAHSFHSFEGKLPVTRTKGTLPLFFHPDHPDWLIWIGGENCNGQKCTDLAYYSKNRGDEWDLLLRGVGKCMFAGKKDELTADDLIFCSQHEHEDPRKNLRLVSSVDQFAKTTSIHFDGKPIVGYAKMSEFIVAATKNGTELQSFTSVDGKTFAHAAFPPNYHVGAEYAYTVLDSSTHSIFLHVTDHSAQNNEFGSILKSNSNGTSYVMSLRDANRNKADYVDFEKIQVVEGVAMANIVANADEVRHKGQDKKFRSMISHNDASEWALMPPPKKDVEGHSFDCKVKDKGTEECALHIHGYTERRDSRDSMSSGSAVGLIIGVGNVGPYLTTRAESDTFMSRDAGITWHQVRKGRYQWEFGDQGSIVVIVAEEKPTKVLSYSLDEGETWTDFEFTDKEVKVEDISTVPSDTSRNFLLWARGGSPGELIAYNVDFTGLKEREKQCVLKKESPEADDYYLWSPKHPQQKSNCLFGHVSVYHRKRPEAKCYNGPKLDRLSSEKKNCECTRQDYECDYNYERQSDGSCALVKGLQPADPMKICKDDPEAVEYFEPTGYRKLPVSTCEGGHQLDHIVARPCPNKKKEFEKKHPGIGGFGIFLAIFFPVTAATAIGYWAFSKWDGKFGRIRLGESQPESLFAGNSPLITIPVAIVAGTVAVITALPLLFSSLWRSFKGYTRLSNPWGQRQRPYASRDAFAARRGEYVGVVDDEDELLGAEEFEGDDDEEV</sequence>
<organism>
    <name type="scientific">Arthroderma gypseum (strain ATCC MYA-4604 / CBS 118893)</name>
    <name type="common">Microsporum gypseum</name>
    <dbReference type="NCBI Taxonomy" id="535722"/>
    <lineage>
        <taxon>Eukaryota</taxon>
        <taxon>Fungi</taxon>
        <taxon>Dikarya</taxon>
        <taxon>Ascomycota</taxon>
        <taxon>Pezizomycotina</taxon>
        <taxon>Eurotiomycetes</taxon>
        <taxon>Eurotiomycetidae</taxon>
        <taxon>Onygenales</taxon>
        <taxon>Arthrodermataceae</taxon>
        <taxon>Nannizzia</taxon>
    </lineage>
</organism>
<comment type="function">
    <text evidence="1">Functions as a sorting receptor in the Golgi compartment required for the intracellular sorting and delivery of soluble vacuolar proteins, like carboxypeptidase Y (CPY) and proteinase A. Executes multiple rounds of sorting by cycling between the late Golgi and a prevacuolar endosome-like compartment (By similarity).</text>
</comment>
<comment type="subcellular location">
    <subcellularLocation>
        <location evidence="1">Golgi apparatus</location>
        <location evidence="1">trans-Golgi network membrane</location>
        <topology evidence="1">Multi-pass membrane protein</topology>
    </subcellularLocation>
    <subcellularLocation>
        <location evidence="1">Prevacuolar compartment membrane</location>
        <topology evidence="1">Multi-pass membrane protein</topology>
    </subcellularLocation>
    <text evidence="1">Cycles between the Golgi apparatus and the prevacuolar compartment.</text>
</comment>
<comment type="similarity">
    <text evidence="3">Belongs to the VPS10-related sortilin family.</text>
</comment>
<protein>
    <recommendedName>
        <fullName>Vacuolar protein sorting/targeting protein 10</fullName>
    </recommendedName>
    <alternativeName>
        <fullName>Carboxypeptidase Y receptor</fullName>
        <shortName>CPY receptor</shortName>
    </alternativeName>
    <alternativeName>
        <fullName>Sortilin VPS10</fullName>
    </alternativeName>
    <alternativeName>
        <fullName>Vacuolar carboxypeptidase sorting receptor VPS10</fullName>
    </alternativeName>
</protein>
<gene>
    <name type="primary">VPS10</name>
    <name type="ORF">MGYG_05206</name>
</gene>
<evidence type="ECO:0000250" key="1"/>
<evidence type="ECO:0000255" key="2"/>
<evidence type="ECO:0000305" key="3"/>
<reference key="1">
    <citation type="journal article" date="2012" name="MBio">
        <title>Comparative genome analysis of Trichophyton rubrum and related dermatophytes reveals candidate genes involved in infection.</title>
        <authorList>
            <person name="Martinez D.A."/>
            <person name="Oliver B.G."/>
            <person name="Graeser Y."/>
            <person name="Goldberg J.M."/>
            <person name="Li W."/>
            <person name="Martinez-Rossi N.M."/>
            <person name="Monod M."/>
            <person name="Shelest E."/>
            <person name="Barton R.C."/>
            <person name="Birch E."/>
            <person name="Brakhage A.A."/>
            <person name="Chen Z."/>
            <person name="Gurr S.J."/>
            <person name="Heiman D."/>
            <person name="Heitman J."/>
            <person name="Kosti I."/>
            <person name="Rossi A."/>
            <person name="Saif S."/>
            <person name="Samalova M."/>
            <person name="Saunders C.W."/>
            <person name="Shea T."/>
            <person name="Summerbell R.C."/>
            <person name="Xu J."/>
            <person name="Young S."/>
            <person name="Zeng Q."/>
            <person name="Birren B.W."/>
            <person name="Cuomo C.A."/>
            <person name="White T.C."/>
        </authorList>
    </citation>
    <scope>NUCLEOTIDE SEQUENCE [LARGE SCALE GENOMIC DNA]</scope>
    <source>
        <strain>ATCC MYA-4604 / CBS 118893</strain>
    </source>
</reference>
<feature type="signal peptide" evidence="2">
    <location>
        <begin position="1"/>
        <end position="23"/>
    </location>
</feature>
<feature type="chain" id="PRO_0000407500" description="Vacuolar protein sorting/targeting protein 10">
    <location>
        <begin position="24"/>
        <end position="1483"/>
    </location>
</feature>
<feature type="topological domain" description="Lumenal" evidence="2">
    <location>
        <begin position="24"/>
        <end position="1347"/>
    </location>
</feature>
<feature type="transmembrane region" description="Helical" evidence="2">
    <location>
        <begin position="1348"/>
        <end position="1368"/>
    </location>
</feature>
<feature type="topological domain" description="Cytoplasmic" evidence="2">
    <location>
        <begin position="1369"/>
        <end position="1399"/>
    </location>
</feature>
<feature type="transmembrane region" description="Helical" evidence="2">
    <location>
        <begin position="1400"/>
        <end position="1420"/>
    </location>
</feature>
<feature type="topological domain" description="Lumenal" evidence="2">
    <location>
        <begin position="1421"/>
        <end position="1483"/>
    </location>
</feature>
<feature type="repeat" description="BNR 1">
    <location>
        <begin position="376"/>
        <end position="385"/>
    </location>
</feature>
<feature type="repeat" description="BNR 2">
    <location>
        <begin position="436"/>
        <end position="446"/>
    </location>
</feature>
<feature type="repeat" description="BNR 3">
    <location>
        <begin position="482"/>
        <end position="492"/>
    </location>
</feature>
<feature type="repeat" description="BNR 4">
    <location>
        <begin position="716"/>
        <end position="726"/>
    </location>
</feature>
<feature type="repeat" description="BNR 5">
    <location>
        <begin position="1098"/>
        <end position="1108"/>
    </location>
</feature>
<feature type="repeat" description="BNR 6">
    <location>
        <begin position="1140"/>
        <end position="1149"/>
    </location>
</feature>
<feature type="glycosylation site" description="N-linked (GlcNAc...) asparagine" evidence="2">
    <location>
        <position position="295"/>
    </location>
</feature>
<feature type="glycosylation site" description="N-linked (GlcNAc...) asparagine" evidence="2">
    <location>
        <position position="898"/>
    </location>
</feature>
<feature type="glycosylation site" description="N-linked (GlcNAc...) asparagine" evidence="2">
    <location>
        <position position="963"/>
    </location>
</feature>
<accession>E4UV76</accession>
<dbReference type="EMBL" id="DS989825">
    <property type="protein sequence ID" value="EFR02203.1"/>
    <property type="molecule type" value="Genomic_DNA"/>
</dbReference>
<dbReference type="RefSeq" id="XP_003172614.1">
    <property type="nucleotide sequence ID" value="XM_003172566.1"/>
</dbReference>
<dbReference type="SMR" id="E4UV76"/>
<dbReference type="FunCoup" id="E4UV76">
    <property type="interactions" value="191"/>
</dbReference>
<dbReference type="STRING" id="535722.E4UV76"/>
<dbReference type="GlyCosmos" id="E4UV76">
    <property type="glycosylation" value="3 sites, No reported glycans"/>
</dbReference>
<dbReference type="GeneID" id="10027887"/>
<dbReference type="VEuPathDB" id="FungiDB:MGYG_05206"/>
<dbReference type="eggNOG" id="KOG3511">
    <property type="taxonomic scope" value="Eukaryota"/>
</dbReference>
<dbReference type="HOGENOM" id="CLU_000700_0_0_1"/>
<dbReference type="InParanoid" id="E4UV76"/>
<dbReference type="OMA" id="ATMSEFI"/>
<dbReference type="OrthoDB" id="443634at2759"/>
<dbReference type="Proteomes" id="UP000002669">
    <property type="component" value="Unassembled WGS sequence"/>
</dbReference>
<dbReference type="GO" id="GO:0005829">
    <property type="term" value="C:cytosol"/>
    <property type="evidence" value="ECO:0007669"/>
    <property type="project" value="GOC"/>
</dbReference>
<dbReference type="GO" id="GO:0005794">
    <property type="term" value="C:Golgi apparatus"/>
    <property type="evidence" value="ECO:0007669"/>
    <property type="project" value="UniProtKB-SubCell"/>
</dbReference>
<dbReference type="GO" id="GO:0016020">
    <property type="term" value="C:membrane"/>
    <property type="evidence" value="ECO:0007669"/>
    <property type="project" value="UniProtKB-KW"/>
</dbReference>
<dbReference type="GO" id="GO:0006895">
    <property type="term" value="P:Golgi to endosome transport"/>
    <property type="evidence" value="ECO:0007669"/>
    <property type="project" value="TreeGrafter"/>
</dbReference>
<dbReference type="GO" id="GO:0006896">
    <property type="term" value="P:Golgi to vacuole transport"/>
    <property type="evidence" value="ECO:0007669"/>
    <property type="project" value="TreeGrafter"/>
</dbReference>
<dbReference type="GO" id="GO:0006623">
    <property type="term" value="P:protein targeting to vacuole"/>
    <property type="evidence" value="ECO:0007669"/>
    <property type="project" value="TreeGrafter"/>
</dbReference>
<dbReference type="CDD" id="cd15482">
    <property type="entry name" value="Sialidase_non-viral"/>
    <property type="match status" value="1"/>
</dbReference>
<dbReference type="FunFam" id="3.30.60.270:FF:000005">
    <property type="entry name" value="Sortilin"/>
    <property type="match status" value="2"/>
</dbReference>
<dbReference type="FunFam" id="2.10.70.80:FF:000001">
    <property type="entry name" value="Sortilin-related VPS10 domain-containing receptor 1"/>
    <property type="match status" value="1"/>
</dbReference>
<dbReference type="Gene3D" id="2.10.70.80">
    <property type="match status" value="2"/>
</dbReference>
<dbReference type="Gene3D" id="3.30.60.270">
    <property type="match status" value="2"/>
</dbReference>
<dbReference type="Gene3D" id="2.130.10.10">
    <property type="entry name" value="YVTN repeat-like/Quinoprotein amine dehydrogenase"/>
    <property type="match status" value="1"/>
</dbReference>
<dbReference type="InterPro" id="IPR031777">
    <property type="entry name" value="Sortilin_C"/>
</dbReference>
<dbReference type="InterPro" id="IPR031778">
    <property type="entry name" value="Sortilin_N"/>
</dbReference>
<dbReference type="InterPro" id="IPR006581">
    <property type="entry name" value="VPS10"/>
</dbReference>
<dbReference type="InterPro" id="IPR050310">
    <property type="entry name" value="VPS10-sortilin"/>
</dbReference>
<dbReference type="InterPro" id="IPR015943">
    <property type="entry name" value="WD40/YVTN_repeat-like_dom_sf"/>
</dbReference>
<dbReference type="PANTHER" id="PTHR12106">
    <property type="entry name" value="SORTILIN RELATED"/>
    <property type="match status" value="1"/>
</dbReference>
<dbReference type="PANTHER" id="PTHR12106:SF27">
    <property type="entry name" value="SORTILIN-RELATED RECEPTOR"/>
    <property type="match status" value="1"/>
</dbReference>
<dbReference type="Pfam" id="PF15902">
    <property type="entry name" value="Sortilin-Vps10"/>
    <property type="match status" value="2"/>
</dbReference>
<dbReference type="Pfam" id="PF15901">
    <property type="entry name" value="Sortilin_C"/>
    <property type="match status" value="2"/>
</dbReference>
<dbReference type="SMART" id="SM00602">
    <property type="entry name" value="VPS10"/>
    <property type="match status" value="2"/>
</dbReference>
<dbReference type="SUPFAM" id="SSF110296">
    <property type="entry name" value="Oligoxyloglucan reducing end-specific cellobiohydrolase"/>
    <property type="match status" value="2"/>
</dbReference>